<dbReference type="EC" id="1.1.1.267" evidence="1"/>
<dbReference type="EMBL" id="CP000828">
    <property type="protein sequence ID" value="ABW25612.1"/>
    <property type="molecule type" value="Genomic_DNA"/>
</dbReference>
<dbReference type="RefSeq" id="WP_012161212.1">
    <property type="nucleotide sequence ID" value="NC_009925.1"/>
</dbReference>
<dbReference type="SMR" id="B0CD21"/>
<dbReference type="STRING" id="329726.AM1_0563"/>
<dbReference type="KEGG" id="amr:AM1_0563"/>
<dbReference type="eggNOG" id="COG0743">
    <property type="taxonomic scope" value="Bacteria"/>
</dbReference>
<dbReference type="HOGENOM" id="CLU_035714_4_0_3"/>
<dbReference type="OrthoDB" id="9806546at2"/>
<dbReference type="UniPathway" id="UPA00056">
    <property type="reaction ID" value="UER00092"/>
</dbReference>
<dbReference type="Proteomes" id="UP000000268">
    <property type="component" value="Chromosome"/>
</dbReference>
<dbReference type="GO" id="GO:0030604">
    <property type="term" value="F:1-deoxy-D-xylulose-5-phosphate reductoisomerase activity"/>
    <property type="evidence" value="ECO:0007669"/>
    <property type="project" value="UniProtKB-UniRule"/>
</dbReference>
<dbReference type="GO" id="GO:0030145">
    <property type="term" value="F:manganese ion binding"/>
    <property type="evidence" value="ECO:0007669"/>
    <property type="project" value="TreeGrafter"/>
</dbReference>
<dbReference type="GO" id="GO:0070402">
    <property type="term" value="F:NADPH binding"/>
    <property type="evidence" value="ECO:0007669"/>
    <property type="project" value="InterPro"/>
</dbReference>
<dbReference type="GO" id="GO:0051484">
    <property type="term" value="P:isopentenyl diphosphate biosynthetic process, methylerythritol 4-phosphate pathway involved in terpenoid biosynthetic process"/>
    <property type="evidence" value="ECO:0007669"/>
    <property type="project" value="TreeGrafter"/>
</dbReference>
<dbReference type="FunFam" id="3.40.50.720:FF:000183">
    <property type="entry name" value="1-deoxy-D-xylulose 5-phosphate reductoisomerase, chloroplastic"/>
    <property type="match status" value="1"/>
</dbReference>
<dbReference type="Gene3D" id="1.10.1740.10">
    <property type="match status" value="1"/>
</dbReference>
<dbReference type="Gene3D" id="3.40.50.720">
    <property type="entry name" value="NAD(P)-binding Rossmann-like Domain"/>
    <property type="match status" value="1"/>
</dbReference>
<dbReference type="HAMAP" id="MF_00183">
    <property type="entry name" value="DXP_reductoisom"/>
    <property type="match status" value="1"/>
</dbReference>
<dbReference type="InterPro" id="IPR003821">
    <property type="entry name" value="DXP_reductoisomerase"/>
</dbReference>
<dbReference type="InterPro" id="IPR013644">
    <property type="entry name" value="DXP_reductoisomerase_C"/>
</dbReference>
<dbReference type="InterPro" id="IPR013512">
    <property type="entry name" value="DXP_reductoisomerase_N"/>
</dbReference>
<dbReference type="InterPro" id="IPR026877">
    <property type="entry name" value="DXPR_C"/>
</dbReference>
<dbReference type="InterPro" id="IPR036169">
    <property type="entry name" value="DXPR_C_sf"/>
</dbReference>
<dbReference type="InterPro" id="IPR036291">
    <property type="entry name" value="NAD(P)-bd_dom_sf"/>
</dbReference>
<dbReference type="NCBIfam" id="TIGR00243">
    <property type="entry name" value="Dxr"/>
    <property type="match status" value="1"/>
</dbReference>
<dbReference type="NCBIfam" id="NF009114">
    <property type="entry name" value="PRK12464.1"/>
    <property type="match status" value="1"/>
</dbReference>
<dbReference type="PANTHER" id="PTHR30525">
    <property type="entry name" value="1-DEOXY-D-XYLULOSE 5-PHOSPHATE REDUCTOISOMERASE"/>
    <property type="match status" value="1"/>
</dbReference>
<dbReference type="PANTHER" id="PTHR30525:SF0">
    <property type="entry name" value="1-DEOXY-D-XYLULOSE 5-PHOSPHATE REDUCTOISOMERASE, CHLOROPLASTIC"/>
    <property type="match status" value="1"/>
</dbReference>
<dbReference type="Pfam" id="PF08436">
    <property type="entry name" value="DXP_redisom_C"/>
    <property type="match status" value="1"/>
</dbReference>
<dbReference type="Pfam" id="PF02670">
    <property type="entry name" value="DXP_reductoisom"/>
    <property type="match status" value="1"/>
</dbReference>
<dbReference type="Pfam" id="PF13288">
    <property type="entry name" value="DXPR_C"/>
    <property type="match status" value="1"/>
</dbReference>
<dbReference type="PIRSF" id="PIRSF006205">
    <property type="entry name" value="Dxp_reductismrs"/>
    <property type="match status" value="1"/>
</dbReference>
<dbReference type="SUPFAM" id="SSF69055">
    <property type="entry name" value="1-deoxy-D-xylulose-5-phosphate reductoisomerase, C-terminal domain"/>
    <property type="match status" value="1"/>
</dbReference>
<dbReference type="SUPFAM" id="SSF55347">
    <property type="entry name" value="Glyceraldehyde-3-phosphate dehydrogenase-like, C-terminal domain"/>
    <property type="match status" value="1"/>
</dbReference>
<dbReference type="SUPFAM" id="SSF51735">
    <property type="entry name" value="NAD(P)-binding Rossmann-fold domains"/>
    <property type="match status" value="1"/>
</dbReference>
<sequence>MKAITLLGSTGSIGTQTLDIVAQYPDQFRIVGMAAGRNIELLSQQIRQFRPEIVAIADPNQLSDLKDAIADVDPQPQLLAGEAGVVEVAAYGDAESVVTGIVGCAGLLPTIAAIKAGKDIALANKETLIAGGPVVLPLVEKHGVKLLPADSEHSAIFQCLQGVPEGGLRRIILTASGGAFRDWPVEKLPEVTVADALKHPNWSMGKKITVDSATLMNKGLEVIEAHYLFGVDYDHIDIVIHPQSIIHSLIELQDTSVLAQLGWPDMRLPLLYSLSWPERIATDWEQLDLVKSGDLTFREPNHQKYPCMQLAYDVGRMGGAMPAVMNAANEQAVALFLEEKISFLDIPKVIETACDRYQSQNTLQPSLEDILAADQWARQEILTISQSQTPVVTASPQLSAI</sequence>
<reference key="1">
    <citation type="journal article" date="2008" name="Proc. Natl. Acad. Sci. U.S.A.">
        <title>Niche adaptation and genome expansion in the chlorophyll d-producing cyanobacterium Acaryochloris marina.</title>
        <authorList>
            <person name="Swingley W.D."/>
            <person name="Chen M."/>
            <person name="Cheung P.C."/>
            <person name="Conrad A.L."/>
            <person name="Dejesa L.C."/>
            <person name="Hao J."/>
            <person name="Honchak B.M."/>
            <person name="Karbach L.E."/>
            <person name="Kurdoglu A."/>
            <person name="Lahiri S."/>
            <person name="Mastrian S.D."/>
            <person name="Miyashita H."/>
            <person name="Page L."/>
            <person name="Ramakrishna P."/>
            <person name="Satoh S."/>
            <person name="Sattley W.M."/>
            <person name="Shimada Y."/>
            <person name="Taylor H.L."/>
            <person name="Tomo T."/>
            <person name="Tsuchiya T."/>
            <person name="Wang Z.T."/>
            <person name="Raymond J."/>
            <person name="Mimuro M."/>
            <person name="Blankenship R.E."/>
            <person name="Touchman J.W."/>
        </authorList>
    </citation>
    <scope>NUCLEOTIDE SEQUENCE [LARGE SCALE GENOMIC DNA]</scope>
    <source>
        <strain>MBIC 11017</strain>
    </source>
</reference>
<organism>
    <name type="scientific">Acaryochloris marina (strain MBIC 11017)</name>
    <dbReference type="NCBI Taxonomy" id="329726"/>
    <lineage>
        <taxon>Bacteria</taxon>
        <taxon>Bacillati</taxon>
        <taxon>Cyanobacteriota</taxon>
        <taxon>Cyanophyceae</taxon>
        <taxon>Acaryochloridales</taxon>
        <taxon>Acaryochloridaceae</taxon>
        <taxon>Acaryochloris</taxon>
    </lineage>
</organism>
<comment type="function">
    <text evidence="1">Catalyzes the NADPH-dependent rearrangement and reduction of 1-deoxy-D-xylulose-5-phosphate (DXP) to 2-C-methyl-D-erythritol 4-phosphate (MEP).</text>
</comment>
<comment type="catalytic activity">
    <reaction evidence="1">
        <text>2-C-methyl-D-erythritol 4-phosphate + NADP(+) = 1-deoxy-D-xylulose 5-phosphate + NADPH + H(+)</text>
        <dbReference type="Rhea" id="RHEA:13717"/>
        <dbReference type="ChEBI" id="CHEBI:15378"/>
        <dbReference type="ChEBI" id="CHEBI:57783"/>
        <dbReference type="ChEBI" id="CHEBI:57792"/>
        <dbReference type="ChEBI" id="CHEBI:58262"/>
        <dbReference type="ChEBI" id="CHEBI:58349"/>
        <dbReference type="EC" id="1.1.1.267"/>
    </reaction>
    <physiologicalReaction direction="right-to-left" evidence="1">
        <dbReference type="Rhea" id="RHEA:13719"/>
    </physiologicalReaction>
</comment>
<comment type="cofactor">
    <cofactor evidence="1">
        <name>Mg(2+)</name>
        <dbReference type="ChEBI" id="CHEBI:18420"/>
    </cofactor>
    <cofactor evidence="1">
        <name>Mn(2+)</name>
        <dbReference type="ChEBI" id="CHEBI:29035"/>
    </cofactor>
</comment>
<comment type="pathway">
    <text evidence="1">Isoprenoid biosynthesis; isopentenyl diphosphate biosynthesis via DXP pathway; isopentenyl diphosphate from 1-deoxy-D-xylulose 5-phosphate: step 1/6.</text>
</comment>
<comment type="similarity">
    <text evidence="1">Belongs to the DXR family.</text>
</comment>
<keyword id="KW-0414">Isoprene biosynthesis</keyword>
<keyword id="KW-0464">Manganese</keyword>
<keyword id="KW-0479">Metal-binding</keyword>
<keyword id="KW-0521">NADP</keyword>
<keyword id="KW-0560">Oxidoreductase</keyword>
<keyword id="KW-1185">Reference proteome</keyword>
<name>DXR_ACAM1</name>
<proteinExistence type="inferred from homology"/>
<feature type="chain" id="PRO_1000189849" description="1-deoxy-D-xylulose 5-phosphate reductoisomerase">
    <location>
        <begin position="1"/>
        <end position="401"/>
    </location>
</feature>
<feature type="binding site" evidence="1">
    <location>
        <position position="10"/>
    </location>
    <ligand>
        <name>NADPH</name>
        <dbReference type="ChEBI" id="CHEBI:57783"/>
    </ligand>
</feature>
<feature type="binding site" evidence="1">
    <location>
        <position position="11"/>
    </location>
    <ligand>
        <name>NADPH</name>
        <dbReference type="ChEBI" id="CHEBI:57783"/>
    </ligand>
</feature>
<feature type="binding site" evidence="1">
    <location>
        <position position="12"/>
    </location>
    <ligand>
        <name>NADPH</name>
        <dbReference type="ChEBI" id="CHEBI:57783"/>
    </ligand>
</feature>
<feature type="binding site" evidence="1">
    <location>
        <position position="13"/>
    </location>
    <ligand>
        <name>NADPH</name>
        <dbReference type="ChEBI" id="CHEBI:57783"/>
    </ligand>
</feature>
<feature type="binding site" evidence="1">
    <location>
        <position position="36"/>
    </location>
    <ligand>
        <name>NADPH</name>
        <dbReference type="ChEBI" id="CHEBI:57783"/>
    </ligand>
</feature>
<feature type="binding site" evidence="1">
    <location>
        <position position="37"/>
    </location>
    <ligand>
        <name>NADPH</name>
        <dbReference type="ChEBI" id="CHEBI:57783"/>
    </ligand>
</feature>
<feature type="binding site" evidence="1">
    <location>
        <position position="38"/>
    </location>
    <ligand>
        <name>NADPH</name>
        <dbReference type="ChEBI" id="CHEBI:57783"/>
    </ligand>
</feature>
<feature type="binding site" evidence="1">
    <location>
        <position position="124"/>
    </location>
    <ligand>
        <name>NADPH</name>
        <dbReference type="ChEBI" id="CHEBI:57783"/>
    </ligand>
</feature>
<feature type="binding site" evidence="1">
    <location>
        <position position="125"/>
    </location>
    <ligand>
        <name>1-deoxy-D-xylulose 5-phosphate</name>
        <dbReference type="ChEBI" id="CHEBI:57792"/>
    </ligand>
</feature>
<feature type="binding site" evidence="1">
    <location>
        <position position="126"/>
    </location>
    <ligand>
        <name>NADPH</name>
        <dbReference type="ChEBI" id="CHEBI:57783"/>
    </ligand>
</feature>
<feature type="binding site" evidence="1">
    <location>
        <position position="150"/>
    </location>
    <ligand>
        <name>Mn(2+)</name>
        <dbReference type="ChEBI" id="CHEBI:29035"/>
    </ligand>
</feature>
<feature type="binding site" evidence="1">
    <location>
        <position position="151"/>
    </location>
    <ligand>
        <name>1-deoxy-D-xylulose 5-phosphate</name>
        <dbReference type="ChEBI" id="CHEBI:57792"/>
    </ligand>
</feature>
<feature type="binding site" evidence="1">
    <location>
        <position position="152"/>
    </location>
    <ligand>
        <name>1-deoxy-D-xylulose 5-phosphate</name>
        <dbReference type="ChEBI" id="CHEBI:57792"/>
    </ligand>
</feature>
<feature type="binding site" evidence="1">
    <location>
        <position position="152"/>
    </location>
    <ligand>
        <name>Mn(2+)</name>
        <dbReference type="ChEBI" id="CHEBI:29035"/>
    </ligand>
</feature>
<feature type="binding site" evidence="1">
    <location>
        <position position="176"/>
    </location>
    <ligand>
        <name>1-deoxy-D-xylulose 5-phosphate</name>
        <dbReference type="ChEBI" id="CHEBI:57792"/>
    </ligand>
</feature>
<feature type="binding site" evidence="1">
    <location>
        <position position="199"/>
    </location>
    <ligand>
        <name>1-deoxy-D-xylulose 5-phosphate</name>
        <dbReference type="ChEBI" id="CHEBI:57792"/>
    </ligand>
</feature>
<feature type="binding site" evidence="1">
    <location>
        <position position="205"/>
    </location>
    <ligand>
        <name>NADPH</name>
        <dbReference type="ChEBI" id="CHEBI:57783"/>
    </ligand>
</feature>
<feature type="binding site" evidence="1">
    <location>
        <position position="212"/>
    </location>
    <ligand>
        <name>1-deoxy-D-xylulose 5-phosphate</name>
        <dbReference type="ChEBI" id="CHEBI:57792"/>
    </ligand>
</feature>
<feature type="binding site" evidence="1">
    <location>
        <position position="217"/>
    </location>
    <ligand>
        <name>1-deoxy-D-xylulose 5-phosphate</name>
        <dbReference type="ChEBI" id="CHEBI:57792"/>
    </ligand>
</feature>
<feature type="binding site" evidence="1">
    <location>
        <position position="218"/>
    </location>
    <ligand>
        <name>1-deoxy-D-xylulose 5-phosphate</name>
        <dbReference type="ChEBI" id="CHEBI:57792"/>
    </ligand>
</feature>
<feature type="binding site" evidence="1">
    <location>
        <position position="221"/>
    </location>
    <ligand>
        <name>1-deoxy-D-xylulose 5-phosphate</name>
        <dbReference type="ChEBI" id="CHEBI:57792"/>
    </ligand>
</feature>
<feature type="binding site" evidence="1">
    <location>
        <position position="221"/>
    </location>
    <ligand>
        <name>Mn(2+)</name>
        <dbReference type="ChEBI" id="CHEBI:29035"/>
    </ligand>
</feature>
<protein>
    <recommendedName>
        <fullName evidence="1">1-deoxy-D-xylulose 5-phosphate reductoisomerase</fullName>
        <shortName evidence="1">DXP reductoisomerase</shortName>
        <ecNumber evidence="1">1.1.1.267</ecNumber>
    </recommendedName>
    <alternativeName>
        <fullName evidence="1">1-deoxyxylulose-5-phosphate reductoisomerase</fullName>
    </alternativeName>
    <alternativeName>
        <fullName evidence="1">2-C-methyl-D-erythritol 4-phosphate synthase</fullName>
    </alternativeName>
</protein>
<evidence type="ECO:0000255" key="1">
    <source>
        <dbReference type="HAMAP-Rule" id="MF_00183"/>
    </source>
</evidence>
<gene>
    <name evidence="1" type="primary">dxr</name>
    <name type="ordered locus">AM1_0563</name>
</gene>
<accession>B0CD21</accession>